<organism>
    <name type="scientific">Mus musculus</name>
    <name type="common">Mouse</name>
    <dbReference type="NCBI Taxonomy" id="10090"/>
    <lineage>
        <taxon>Eukaryota</taxon>
        <taxon>Metazoa</taxon>
        <taxon>Chordata</taxon>
        <taxon>Craniata</taxon>
        <taxon>Vertebrata</taxon>
        <taxon>Euteleostomi</taxon>
        <taxon>Mammalia</taxon>
        <taxon>Eutheria</taxon>
        <taxon>Euarchontoglires</taxon>
        <taxon>Glires</taxon>
        <taxon>Rodentia</taxon>
        <taxon>Myomorpha</taxon>
        <taxon>Muroidea</taxon>
        <taxon>Muridae</taxon>
        <taxon>Murinae</taxon>
        <taxon>Mus</taxon>
        <taxon>Mus</taxon>
    </lineage>
</organism>
<proteinExistence type="evidence at protein level"/>
<sequence>MDSFDLALLQEWDLESLWGEDILSQRNDSLVLEVQASASRCRSVYEPDRNALRRKERERRSQETQQDSGSFNSGYSLFSEPYKTNKGDELSNRIQNTLGNYDEMKDFLTDRSNQSHLVGVPKPGVPQTPVNKIDEHFGAESRAQPQPSTVCSTASSTPAAVPVQQGKRGAMGWQKAGHPPSDGQQRAAQQGSLRTLLGDGVGRQQTRAKQVCNMETGLQTQERPPAMAAKHGGSGHCVQNFPPSLASKPSLVQQKPTAYVRPMDGQDQAPDESPKLKSSTETAVHCTAYRGVPANKPESARAKAKLAKFSIPKQAEESRSGENNSCVEEIIREMTWLPPLSAIQAPAKVEPSKFPFPNKDSQLVSSGHSNPKKADAEPGSPDNGASNTSTLEDDLKLSSDDEEGEQQAAQRTALRALADSSVVQQTNCRGSAPSSKGGGSSSSSGGSSSSSDSESTSGSDSETESSSSSSESEGSKPPHCSSPEAEPASSNKWQLDKWLNKVNPHKPPILIQNESHGPERNQYYTPPVKDEGQDCGKLPEICQASLRDKELKTTCKEEQRPRTANKAPGSKSVKQKSPPAAVAVTAAALPPAVPSAPTESAPAPTRRSAGKKPTRRTERTSAGDGANCHRPEEPVAPDTLGASVVGPLEPPKTRPCGNNRTGHRKELRSSVTCEKRRTRGLSRIVPKSKEFIETESSSSSSSSDSDLESEQEEYVLSKAPTTTGSEQRLKEAASSNNNSNSNSSTSRASVGSINARTTSDIAKELEEQFYTLVPFGRNELLSPLKDSDEVRSLWVKIDLTLLSRIPEHLSQEPGVLSAPSAKDTDSAPASHALDAPAEKTLPKSKRKRKCDNEDDYREIKKVQGRKESASRLAASTNNTLSGNHCNVNVNSLAIPINKNEKMLRSPTSPLSDTCKHKYASEDLTSSSRPHGNGLLTSASSNKEPKAESQLQTIAGDLTKASHNSSENGTLHSKSRPQTEPWSPGSNGHRDCKRQKLIFDDMPRSADYFMREAKRMKHKADAMVEKFGKALNYAEAALSFIECGNAMEQGPMESKSPYTMYSETVELIRYAMRLKTHSGPNATPEDKQLAALCYRCLALLYWRMFRLKRDHAVKYSKALIDYFKNSSKAAQAPSPWGSSGKSTGSPSPMSPNPSPASSVGSQGSLSSSSGLSPSTIVSIPQRIHQMAANHVSITNSILHSYDYWEMADNLAKENREFFNDLDLLMGPVTLHSSMEHLVQYSQQGLHWLRSSVHLS</sequence>
<accession>P51827</accession>
<accession>Q80WS6</accession>
<reference key="1">
    <citation type="journal article" date="2009" name="PLoS Biol.">
        <title>Lineage-specific biology revealed by a finished genome assembly of the mouse.</title>
        <authorList>
            <person name="Church D.M."/>
            <person name="Goodstadt L."/>
            <person name="Hillier L.W."/>
            <person name="Zody M.C."/>
            <person name="Goldstein S."/>
            <person name="She X."/>
            <person name="Bult C.J."/>
            <person name="Agarwala R."/>
            <person name="Cherry J.L."/>
            <person name="DiCuccio M."/>
            <person name="Hlavina W."/>
            <person name="Kapustin Y."/>
            <person name="Meric P."/>
            <person name="Maglott D."/>
            <person name="Birtle Z."/>
            <person name="Marques A.C."/>
            <person name="Graves T."/>
            <person name="Zhou S."/>
            <person name="Teague B."/>
            <person name="Potamousis K."/>
            <person name="Churas C."/>
            <person name="Place M."/>
            <person name="Herschleb J."/>
            <person name="Runnheim R."/>
            <person name="Forrest D."/>
            <person name="Amos-Landgraf J."/>
            <person name="Schwartz D.C."/>
            <person name="Cheng Z."/>
            <person name="Lindblad-Toh K."/>
            <person name="Eichler E.E."/>
            <person name="Ponting C.P."/>
        </authorList>
    </citation>
    <scope>NUCLEOTIDE SEQUENCE [LARGE SCALE GENOMIC DNA]</scope>
    <source>
        <strain>C57BL/6J</strain>
    </source>
</reference>
<reference key="2">
    <citation type="journal article" date="2004" name="Genome Res.">
        <title>The status, quality, and expansion of the NIH full-length cDNA project: the Mammalian Gene Collection (MGC).</title>
        <authorList>
            <consortium name="The MGC Project Team"/>
        </authorList>
    </citation>
    <scope>NUCLEOTIDE SEQUENCE [LARGE SCALE MRNA] (ISOFORM 2)</scope>
    <source>
        <strain>C57BL/6J</strain>
        <tissue>Brain</tissue>
    </source>
</reference>
<reference key="3">
    <citation type="journal article" date="1996" name="Blood">
        <title>LAF-4 encodes a lymphoid nuclear protein with transactivation potential that is homologous to AF-4, the gene fused to MLL in t(4;11) leukemias.</title>
        <authorList>
            <person name="Ma C."/>
            <person name="Staudt L.M."/>
        </authorList>
    </citation>
    <scope>NUCLEOTIDE SEQUENCE [MRNA] OF 1-229</scope>
</reference>
<reference key="4">
    <citation type="journal article" date="2010" name="Cell">
        <title>A tissue-specific atlas of mouse protein phosphorylation and expression.</title>
        <authorList>
            <person name="Huttlin E.L."/>
            <person name="Jedrychowski M.P."/>
            <person name="Elias J.E."/>
            <person name="Goswami T."/>
            <person name="Rad R."/>
            <person name="Beausoleil S.A."/>
            <person name="Villen J."/>
            <person name="Haas W."/>
            <person name="Sowa M.E."/>
            <person name="Gygi S.P."/>
        </authorList>
    </citation>
    <scope>PHOSPHORYLATION [LARGE SCALE ANALYSIS] AT SER-782</scope>
    <scope>IDENTIFICATION BY MASS SPECTROMETRY [LARGE SCALE ANALYSIS]</scope>
    <source>
        <tissue>Lung</tissue>
        <tissue>Spleen</tissue>
    </source>
</reference>
<evidence type="ECO:0000250" key="1">
    <source>
        <dbReference type="UniProtKB" id="P51826"/>
    </source>
</evidence>
<evidence type="ECO:0000256" key="2">
    <source>
        <dbReference type="SAM" id="MobiDB-lite"/>
    </source>
</evidence>
<evidence type="ECO:0000303" key="3">
    <source>
    </source>
</evidence>
<evidence type="ECO:0000305" key="4"/>
<evidence type="ECO:0007744" key="5">
    <source>
    </source>
</evidence>
<protein>
    <recommendedName>
        <fullName>AF4/FMR2 family member 3</fullName>
    </recommendedName>
    <alternativeName>
        <fullName>Lymphoid nuclear protein related to AF4</fullName>
        <shortName>Protein LAF-4</shortName>
    </alternativeName>
</protein>
<keyword id="KW-0010">Activator</keyword>
<keyword id="KW-0025">Alternative splicing</keyword>
<keyword id="KW-0238">DNA-binding</keyword>
<keyword id="KW-0539">Nucleus</keyword>
<keyword id="KW-0597">Phosphoprotein</keyword>
<keyword id="KW-1185">Reference proteome</keyword>
<keyword id="KW-0804">Transcription</keyword>
<keyword id="KW-0805">Transcription regulation</keyword>
<gene>
    <name type="primary">Aff3</name>
    <name type="synonym">Laf4</name>
</gene>
<comment type="function">
    <text>Putative transcription activator that may function in lymphoid development and oncogenesis.</text>
</comment>
<comment type="subcellular location">
    <subcellularLocation>
        <location>Nucleus</location>
    </subcellularLocation>
</comment>
<comment type="alternative products">
    <event type="alternative splicing"/>
    <isoform>
        <id>P51827-1</id>
        <name>1</name>
        <sequence type="displayed"/>
    </isoform>
    <isoform>
        <id>P51827-2</id>
        <name>2</name>
        <sequence type="described" ref="VSP_022225 VSP_022226"/>
    </isoform>
</comment>
<comment type="tissue specificity">
    <text>Highest levels found in lymphoid tissues, lower levels in brain and lung.</text>
</comment>
<comment type="miscellaneous">
    <molecule>Isoform 2</molecule>
    <text evidence="4">May be produced at very low levels due to a premature stop codon in the mRNA, leading to nonsense-mediated mRNA decay.</text>
</comment>
<comment type="similarity">
    <text evidence="4">Belongs to the AF4 family.</text>
</comment>
<feature type="chain" id="PRO_0000215917" description="AF4/FMR2 family member 3">
    <location>
        <begin position="1"/>
        <end position="1254"/>
    </location>
</feature>
<feature type="region of interest" description="Disordered" evidence="2">
    <location>
        <begin position="45"/>
        <end position="90"/>
    </location>
</feature>
<feature type="region of interest" description="Disordered" evidence="2">
    <location>
        <begin position="139"/>
        <end position="190"/>
    </location>
</feature>
<feature type="region of interest" description="Disordered" evidence="2">
    <location>
        <begin position="261"/>
        <end position="324"/>
    </location>
</feature>
<feature type="region of interest" description="Disordered" evidence="2">
    <location>
        <begin position="350"/>
        <end position="534"/>
    </location>
</feature>
<feature type="region of interest" description="Disordered" evidence="2">
    <location>
        <begin position="552"/>
        <end position="752"/>
    </location>
</feature>
<feature type="region of interest" description="Disordered" evidence="2">
    <location>
        <begin position="813"/>
        <end position="883"/>
    </location>
</feature>
<feature type="region of interest" description="Disordered" evidence="2">
    <location>
        <begin position="919"/>
        <end position="991"/>
    </location>
</feature>
<feature type="region of interest" description="Disordered" evidence="2">
    <location>
        <begin position="1128"/>
        <end position="1171"/>
    </location>
</feature>
<feature type="compositionally biased region" description="Basic and acidic residues" evidence="2">
    <location>
        <begin position="45"/>
        <end position="62"/>
    </location>
</feature>
<feature type="compositionally biased region" description="Polar residues" evidence="2">
    <location>
        <begin position="67"/>
        <end position="76"/>
    </location>
</feature>
<feature type="compositionally biased region" description="Polar residues" evidence="2">
    <location>
        <begin position="143"/>
        <end position="158"/>
    </location>
</feature>
<feature type="compositionally biased region" description="Polar residues" evidence="2">
    <location>
        <begin position="359"/>
        <end position="369"/>
    </location>
</feature>
<feature type="compositionally biased region" description="Low complexity" evidence="2">
    <location>
        <begin position="406"/>
        <end position="418"/>
    </location>
</feature>
<feature type="compositionally biased region" description="Polar residues" evidence="2">
    <location>
        <begin position="421"/>
        <end position="433"/>
    </location>
</feature>
<feature type="compositionally biased region" description="Low complexity" evidence="2">
    <location>
        <begin position="441"/>
        <end position="472"/>
    </location>
</feature>
<feature type="compositionally biased region" description="Basic and acidic residues" evidence="2">
    <location>
        <begin position="552"/>
        <end position="561"/>
    </location>
</feature>
<feature type="compositionally biased region" description="Low complexity" evidence="2">
    <location>
        <begin position="577"/>
        <end position="605"/>
    </location>
</feature>
<feature type="compositionally biased region" description="Basic and acidic residues" evidence="2">
    <location>
        <begin position="615"/>
        <end position="633"/>
    </location>
</feature>
<feature type="compositionally biased region" description="Low complexity" evidence="2">
    <location>
        <begin position="694"/>
        <end position="704"/>
    </location>
</feature>
<feature type="compositionally biased region" description="Low complexity" evidence="2">
    <location>
        <begin position="732"/>
        <end position="749"/>
    </location>
</feature>
<feature type="compositionally biased region" description="Basic and acidic residues" evidence="2">
    <location>
        <begin position="857"/>
        <end position="869"/>
    </location>
</feature>
<feature type="compositionally biased region" description="Polar residues" evidence="2">
    <location>
        <begin position="873"/>
        <end position="883"/>
    </location>
</feature>
<feature type="compositionally biased region" description="Polar residues" evidence="2">
    <location>
        <begin position="922"/>
        <end position="941"/>
    </location>
</feature>
<feature type="compositionally biased region" description="Polar residues" evidence="2">
    <location>
        <begin position="960"/>
        <end position="985"/>
    </location>
</feature>
<feature type="compositionally biased region" description="Low complexity" evidence="2">
    <location>
        <begin position="1132"/>
        <end position="1146"/>
    </location>
</feature>
<feature type="compositionally biased region" description="Low complexity" evidence="2">
    <location>
        <begin position="1154"/>
        <end position="1171"/>
    </location>
</feature>
<feature type="modified residue" description="Phosphoserine" evidence="5">
    <location>
        <position position="782"/>
    </location>
</feature>
<feature type="modified residue" description="Phosphoserine" evidence="1">
    <location>
        <position position="908"/>
    </location>
</feature>
<feature type="splice variant" id="VSP_022225" description="In isoform 2." evidence="3">
    <location>
        <position position="407"/>
    </location>
</feature>
<feature type="splice variant" id="VSP_022226" description="In isoform 2." evidence="3">
    <location>
        <begin position="564"/>
        <end position="1254"/>
    </location>
</feature>
<feature type="sequence conflict" description="In Ref. 3; AAA98764." evidence="4" ref="3">
    <original>WGEDILSQRNDSLVLEVQASASRCRSVYEPDRNA</original>
    <variation>CVSITGQEV</variation>
    <location>
        <begin position="18"/>
        <end position="51"/>
    </location>
</feature>
<feature type="sequence conflict" description="In Ref. 3; AAA98764." evidence="4" ref="3">
    <original>SE</original>
    <variation>RQ</variation>
    <location>
        <begin position="79"/>
        <end position="80"/>
    </location>
</feature>
<feature type="sequence conflict" description="In Ref. 3; AAA98764." evidence="4" ref="3">
    <original>T</original>
    <variation>S</variation>
    <location>
        <position position="84"/>
    </location>
</feature>
<feature type="sequence conflict" description="In Ref. 3; AAA98764." evidence="4" ref="3">
    <original>P</original>
    <variation>S</variation>
    <location>
        <position position="145"/>
    </location>
</feature>
<name>AFF3_MOUSE</name>
<dbReference type="EMBL" id="AC117789">
    <property type="status" value="NOT_ANNOTATED_CDS"/>
    <property type="molecule type" value="Genomic_DNA"/>
</dbReference>
<dbReference type="EMBL" id="AC122026">
    <property type="status" value="NOT_ANNOTATED_CDS"/>
    <property type="molecule type" value="Genomic_DNA"/>
</dbReference>
<dbReference type="EMBL" id="AC132381">
    <property type="status" value="NOT_ANNOTATED_CDS"/>
    <property type="molecule type" value="Genomic_DNA"/>
</dbReference>
<dbReference type="EMBL" id="AC138386">
    <property type="status" value="NOT_ANNOTATED_CDS"/>
    <property type="molecule type" value="Genomic_DNA"/>
</dbReference>
<dbReference type="EMBL" id="BC052061">
    <property type="status" value="NOT_ANNOTATED_CDS"/>
    <property type="molecule type" value="mRNA"/>
</dbReference>
<dbReference type="EMBL" id="U34361">
    <property type="protein sequence ID" value="AAA98764.1"/>
    <property type="molecule type" value="mRNA"/>
</dbReference>
<dbReference type="SMR" id="P51827"/>
<dbReference type="FunCoup" id="P51827">
    <property type="interactions" value="1599"/>
</dbReference>
<dbReference type="IntAct" id="P51827">
    <property type="interactions" value="2"/>
</dbReference>
<dbReference type="STRING" id="10090.ENSMUSP00000092637"/>
<dbReference type="GlyGen" id="P51827">
    <property type="glycosylation" value="4 sites, 1 N-linked glycan (1 site)"/>
</dbReference>
<dbReference type="iPTMnet" id="P51827"/>
<dbReference type="PhosphoSitePlus" id="P51827"/>
<dbReference type="jPOST" id="P51827"/>
<dbReference type="PaxDb" id="10090-ENSMUSP00000092637"/>
<dbReference type="ProteomicsDB" id="285735">
    <molecule id="P51827-1"/>
</dbReference>
<dbReference type="ProteomicsDB" id="285736">
    <molecule id="P51827-2"/>
</dbReference>
<dbReference type="Antibodypedia" id="32831">
    <property type="antibodies" value="57 antibodies from 17 providers"/>
</dbReference>
<dbReference type="Ensembl" id="ENSMUST00000238906.2">
    <molecule id="P51827-1"/>
    <property type="protein sequence ID" value="ENSMUSP00000159147.2"/>
    <property type="gene ID" value="ENSMUSG00000037138.19"/>
</dbReference>
<dbReference type="UCSC" id="uc007asu.1">
    <molecule id="P51827-1"/>
    <property type="organism name" value="mouse"/>
</dbReference>
<dbReference type="AGR" id="MGI:106927"/>
<dbReference type="MGI" id="MGI:106927">
    <property type="gene designation" value="Aff3"/>
</dbReference>
<dbReference type="VEuPathDB" id="HostDB:ENSMUSG00000037138"/>
<dbReference type="eggNOG" id="ENOG502QU9C">
    <property type="taxonomic scope" value="Eukaryota"/>
</dbReference>
<dbReference type="GeneTree" id="ENSGT00950000182974"/>
<dbReference type="InParanoid" id="P51827"/>
<dbReference type="OMA" id="NSHRDCK"/>
<dbReference type="OrthoDB" id="6382204at2759"/>
<dbReference type="PhylomeDB" id="P51827"/>
<dbReference type="ChiTaRS" id="Aff3">
    <property type="organism name" value="mouse"/>
</dbReference>
<dbReference type="PRO" id="PR:P51827"/>
<dbReference type="Proteomes" id="UP000000589">
    <property type="component" value="Chromosome 1"/>
</dbReference>
<dbReference type="RNAct" id="P51827">
    <property type="molecule type" value="protein"/>
</dbReference>
<dbReference type="Bgee" id="ENSMUSG00000037138">
    <property type="expression patterns" value="Expressed in vas deferens and 251 other cell types or tissues"/>
</dbReference>
<dbReference type="ExpressionAtlas" id="P51827">
    <property type="expression patterns" value="baseline and differential"/>
</dbReference>
<dbReference type="GO" id="GO:0005829">
    <property type="term" value="C:cytosol"/>
    <property type="evidence" value="ECO:0007669"/>
    <property type="project" value="Ensembl"/>
</dbReference>
<dbReference type="GO" id="GO:0016604">
    <property type="term" value="C:nuclear body"/>
    <property type="evidence" value="ECO:0007669"/>
    <property type="project" value="Ensembl"/>
</dbReference>
<dbReference type="GO" id="GO:0005634">
    <property type="term" value="C:nucleus"/>
    <property type="evidence" value="ECO:0000314"/>
    <property type="project" value="BHF-UCL"/>
</dbReference>
<dbReference type="GO" id="GO:0003700">
    <property type="term" value="F:DNA-binding transcription factor activity"/>
    <property type="evidence" value="ECO:0000314"/>
    <property type="project" value="MGI"/>
</dbReference>
<dbReference type="GO" id="GO:0003690">
    <property type="term" value="F:double-stranded DNA binding"/>
    <property type="evidence" value="ECO:0000314"/>
    <property type="project" value="MGI"/>
</dbReference>
<dbReference type="GO" id="GO:0006351">
    <property type="term" value="P:DNA-templated transcription"/>
    <property type="evidence" value="ECO:0000304"/>
    <property type="project" value="MGI"/>
</dbReference>
<dbReference type="GO" id="GO:0035116">
    <property type="term" value="P:embryonic hindlimb morphogenesis"/>
    <property type="evidence" value="ECO:0000270"/>
    <property type="project" value="BHF-UCL"/>
</dbReference>
<dbReference type="GO" id="GO:0006355">
    <property type="term" value="P:regulation of DNA-templated transcription"/>
    <property type="evidence" value="ECO:0000314"/>
    <property type="project" value="MGI"/>
</dbReference>
<dbReference type="GO" id="GO:0034612">
    <property type="term" value="P:response to tumor necrosis factor"/>
    <property type="evidence" value="ECO:0007669"/>
    <property type="project" value="Ensembl"/>
</dbReference>
<dbReference type="Gene3D" id="6.10.250.2670">
    <property type="match status" value="1"/>
</dbReference>
<dbReference type="InterPro" id="IPR007797">
    <property type="entry name" value="AF4/FMR2"/>
</dbReference>
<dbReference type="InterPro" id="IPR043640">
    <property type="entry name" value="AF4/FMR2_CHD"/>
</dbReference>
<dbReference type="InterPro" id="IPR043639">
    <property type="entry name" value="AF4_int"/>
</dbReference>
<dbReference type="PANTHER" id="PTHR10528">
    <property type="entry name" value="AF4/FMR2 FAMILY MEMBER"/>
    <property type="match status" value="1"/>
</dbReference>
<dbReference type="PANTHER" id="PTHR10528:SF16">
    <property type="entry name" value="AF4_FMR2 FAMILY MEMBER 3"/>
    <property type="match status" value="1"/>
</dbReference>
<dbReference type="Pfam" id="PF05110">
    <property type="entry name" value="AF-4"/>
    <property type="match status" value="2"/>
</dbReference>
<dbReference type="Pfam" id="PF18875">
    <property type="entry name" value="AF4_int"/>
    <property type="match status" value="1"/>
</dbReference>
<dbReference type="Pfam" id="PF18876">
    <property type="entry name" value="AFF4_CHD"/>
    <property type="match status" value="1"/>
</dbReference>